<name>RECB_CHLTR</name>
<accession>O84645</accession>
<proteinExistence type="inferred from homology"/>
<evidence type="ECO:0000255" key="1">
    <source>
        <dbReference type="HAMAP-Rule" id="MF_01485"/>
    </source>
</evidence>
<sequence length="1026" mass="117829">MSSFDIFSPTASVSGKFFLEASAGTGKTFTIEQVVLRSLLEGSIEQTKNILVVTFTNAATNELKLRIQASLKQALSLFSQALSHPGTPLPPYISSSETKVKQLYMKIRNSLATLDEMNIFTIHGFCRFTLEQHFPWIQPIQPSSIFSEPQTIQQHILDYLRKNLWDTVLSPKQYAFLSYHHRATTQQTRHLIERLLQDYTSTPNLALSPLSITLQKLKAWVSRYQHLAPLSLEEMQAFSLRFKQSDLSIERELPAFVQQFETNPYSLDMLFFPGMVQKFQEENRNKKKLSAPASPLDPFFQDWIQLAHPFCQKEPIFHTLLKSVQQHLKTHCAQSYSHDESIATLESLLAHNDTVVSQLRKQFQLVLIDEFQDTDKRQWQIFSKLFASPDYSGSLFLIGDPKQSIYEWRNADLPTYLQAKHSFPKEAQLILDTNYRSTPELMQALNHLFSLPTPFLETPQNILYHPLHSKGSAEISYSEFSPIHFFSSEDIQEETLWISKTASYLRSAYSIPFGNMAVLVQDYPQALKLITHSTIPMAYCKEKRIFDRTESPYLLILLLEALLYPENQQKIQAILMSRLFQLSSTEIHQHLKTFSSLFFTLNRHLYHYSLLATFYKLMGENVLSQTIGETLLQTPLGDIIFQELEALCLYLDKTTENPHHKLLHLINILITGKYDEELSFSSQSNDENMIKITTVHSSKGLEYDVVFCSCLNKAKEKTPSVHMREMYVACTRAKKFLFIPFSPIEKRSLSTKKLSALANYANVTKHHSVPHLVETLTSSSPELFSSSFQPPESSLTPDRERLPQQTYFSLPHLPSRTIHSFSSTVENLHFSEPIQELSPSLLFPGGSLTGTLIHKLLESLAGNFAACFEEIFNKAQTLLKNTPLEGYESIIAEKICTVFSTTLPFSSGSFALRNVHPHNIRAEETFLLQEEGELWQGIVDLFFEHKDRFFIIDWKTSFLGDETSCYSPDQLHLYIQRQGLDRQERLYRKAAKRFLHQFNSLLQVEMAFVFIRGLDDKGNGFLQPGR</sequence>
<dbReference type="EC" id="3.1.11.5" evidence="1"/>
<dbReference type="EC" id="5.6.2.4" evidence="1"/>
<dbReference type="EMBL" id="AE001273">
    <property type="protein sequence ID" value="AAC68243.1"/>
    <property type="molecule type" value="Genomic_DNA"/>
</dbReference>
<dbReference type="PIR" id="C71490">
    <property type="entry name" value="C71490"/>
</dbReference>
<dbReference type="RefSeq" id="NP_220157.1">
    <property type="nucleotide sequence ID" value="NC_000117.1"/>
</dbReference>
<dbReference type="RefSeq" id="WP_009872009.1">
    <property type="nucleotide sequence ID" value="NC_000117.1"/>
</dbReference>
<dbReference type="SMR" id="O84645"/>
<dbReference type="FunCoup" id="O84645">
    <property type="interactions" value="5"/>
</dbReference>
<dbReference type="STRING" id="272561.CT_639"/>
<dbReference type="EnsemblBacteria" id="AAC68243">
    <property type="protein sequence ID" value="AAC68243"/>
    <property type="gene ID" value="CT_639"/>
</dbReference>
<dbReference type="GeneID" id="884422"/>
<dbReference type="KEGG" id="ctr:CT_639"/>
<dbReference type="PATRIC" id="fig|272561.5.peg.700"/>
<dbReference type="HOGENOM" id="CLU_001114_6_3_0"/>
<dbReference type="InParanoid" id="O84645"/>
<dbReference type="OrthoDB" id="9810135at2"/>
<dbReference type="Proteomes" id="UP000000431">
    <property type="component" value="Chromosome"/>
</dbReference>
<dbReference type="GO" id="GO:0005829">
    <property type="term" value="C:cytosol"/>
    <property type="evidence" value="ECO:0000318"/>
    <property type="project" value="GO_Central"/>
</dbReference>
<dbReference type="GO" id="GO:0009338">
    <property type="term" value="C:exodeoxyribonuclease V complex"/>
    <property type="evidence" value="ECO:0000318"/>
    <property type="project" value="GO_Central"/>
</dbReference>
<dbReference type="GO" id="GO:0043138">
    <property type="term" value="F:3'-5' DNA helicase activity"/>
    <property type="evidence" value="ECO:0000318"/>
    <property type="project" value="GO_Central"/>
</dbReference>
<dbReference type="GO" id="GO:0005524">
    <property type="term" value="F:ATP binding"/>
    <property type="evidence" value="ECO:0007669"/>
    <property type="project" value="UniProtKB-UniRule"/>
</dbReference>
<dbReference type="GO" id="GO:0016887">
    <property type="term" value="F:ATP hydrolysis activity"/>
    <property type="evidence" value="ECO:0007669"/>
    <property type="project" value="RHEA"/>
</dbReference>
<dbReference type="GO" id="GO:0003677">
    <property type="term" value="F:DNA binding"/>
    <property type="evidence" value="ECO:0007669"/>
    <property type="project" value="UniProtKB-UniRule"/>
</dbReference>
<dbReference type="GO" id="GO:0008854">
    <property type="term" value="F:exodeoxyribonuclease V activity"/>
    <property type="evidence" value="ECO:0007669"/>
    <property type="project" value="UniProtKB-EC"/>
</dbReference>
<dbReference type="GO" id="GO:0000287">
    <property type="term" value="F:magnesium ion binding"/>
    <property type="evidence" value="ECO:0007669"/>
    <property type="project" value="UniProtKB-UniRule"/>
</dbReference>
<dbReference type="GO" id="GO:0000724">
    <property type="term" value="P:double-strand break repair via homologous recombination"/>
    <property type="evidence" value="ECO:0007669"/>
    <property type="project" value="UniProtKB-UniRule"/>
</dbReference>
<dbReference type="GO" id="GO:0000725">
    <property type="term" value="P:recombinational repair"/>
    <property type="evidence" value="ECO:0000318"/>
    <property type="project" value="GO_Central"/>
</dbReference>
<dbReference type="Gene3D" id="3.90.320.10">
    <property type="match status" value="1"/>
</dbReference>
<dbReference type="Gene3D" id="3.40.50.300">
    <property type="entry name" value="P-loop containing nucleotide triphosphate hydrolases"/>
    <property type="match status" value="2"/>
</dbReference>
<dbReference type="Gene3D" id="1.10.486.10">
    <property type="entry name" value="PCRA, domain 4"/>
    <property type="match status" value="1"/>
</dbReference>
<dbReference type="Gene3D" id="1.10.3170.10">
    <property type="entry name" value="Recbcd, chain B, domain 2"/>
    <property type="match status" value="1"/>
</dbReference>
<dbReference type="HAMAP" id="MF_01485">
    <property type="entry name" value="RecB"/>
    <property type="match status" value="1"/>
</dbReference>
<dbReference type="InterPro" id="IPR014017">
    <property type="entry name" value="DNA_helicase_UvrD-like_C"/>
</dbReference>
<dbReference type="InterPro" id="IPR000212">
    <property type="entry name" value="DNA_helicase_UvrD/REP"/>
</dbReference>
<dbReference type="InterPro" id="IPR027417">
    <property type="entry name" value="P-loop_NTPase"/>
</dbReference>
<dbReference type="InterPro" id="IPR011604">
    <property type="entry name" value="PDDEXK-like_dom_sf"/>
</dbReference>
<dbReference type="InterPro" id="IPR004586">
    <property type="entry name" value="RecB"/>
</dbReference>
<dbReference type="InterPro" id="IPR011335">
    <property type="entry name" value="Restrct_endonuc-II-like"/>
</dbReference>
<dbReference type="InterPro" id="IPR014016">
    <property type="entry name" value="UvrD-like_ATP-bd"/>
</dbReference>
<dbReference type="NCBIfam" id="TIGR00609">
    <property type="entry name" value="recB"/>
    <property type="match status" value="1"/>
</dbReference>
<dbReference type="PANTHER" id="PTHR11070:SF23">
    <property type="entry name" value="RECBCD ENZYME SUBUNIT RECB"/>
    <property type="match status" value="1"/>
</dbReference>
<dbReference type="PANTHER" id="PTHR11070">
    <property type="entry name" value="UVRD / RECB / PCRA DNA HELICASE FAMILY MEMBER"/>
    <property type="match status" value="1"/>
</dbReference>
<dbReference type="Pfam" id="PF00580">
    <property type="entry name" value="UvrD-helicase"/>
    <property type="match status" value="1"/>
</dbReference>
<dbReference type="Pfam" id="PF13361">
    <property type="entry name" value="UvrD_C"/>
    <property type="match status" value="2"/>
</dbReference>
<dbReference type="SUPFAM" id="SSF52540">
    <property type="entry name" value="P-loop containing nucleoside triphosphate hydrolases"/>
    <property type="match status" value="1"/>
</dbReference>
<dbReference type="SUPFAM" id="SSF52980">
    <property type="entry name" value="Restriction endonuclease-like"/>
    <property type="match status" value="1"/>
</dbReference>
<dbReference type="PROSITE" id="PS51198">
    <property type="entry name" value="UVRD_HELICASE_ATP_BIND"/>
    <property type="match status" value="1"/>
</dbReference>
<protein>
    <recommendedName>
        <fullName evidence="1">RecBCD enzyme subunit RecB</fullName>
        <ecNumber evidence="1">3.1.11.5</ecNumber>
        <ecNumber evidence="1">5.6.2.4</ecNumber>
    </recommendedName>
    <alternativeName>
        <fullName evidence="1">DNA 3'-5' helicase subunit RecB</fullName>
    </alternativeName>
    <alternativeName>
        <fullName evidence="1">Exonuclease V subunit RecB</fullName>
        <shortName evidence="1">ExoV subunit RecB</shortName>
    </alternativeName>
    <alternativeName>
        <fullName evidence="1">Helicase/nuclease RecBCD subunit RecB</fullName>
    </alternativeName>
</protein>
<organism>
    <name type="scientific">Chlamydia trachomatis serovar D (strain ATCC VR-885 / DSM 19411 / UW-3/Cx)</name>
    <dbReference type="NCBI Taxonomy" id="272561"/>
    <lineage>
        <taxon>Bacteria</taxon>
        <taxon>Pseudomonadati</taxon>
        <taxon>Chlamydiota</taxon>
        <taxon>Chlamydiia</taxon>
        <taxon>Chlamydiales</taxon>
        <taxon>Chlamydiaceae</taxon>
        <taxon>Chlamydia/Chlamydophila group</taxon>
        <taxon>Chlamydia</taxon>
    </lineage>
</organism>
<keyword id="KW-0067">ATP-binding</keyword>
<keyword id="KW-0227">DNA damage</keyword>
<keyword id="KW-0234">DNA repair</keyword>
<keyword id="KW-0238">DNA-binding</keyword>
<keyword id="KW-0269">Exonuclease</keyword>
<keyword id="KW-0347">Helicase</keyword>
<keyword id="KW-0378">Hydrolase</keyword>
<keyword id="KW-0413">Isomerase</keyword>
<keyword id="KW-0460">Magnesium</keyword>
<keyword id="KW-0479">Metal-binding</keyword>
<keyword id="KW-0540">Nuclease</keyword>
<keyword id="KW-0547">Nucleotide-binding</keyword>
<keyword id="KW-1185">Reference proteome</keyword>
<comment type="function">
    <text evidence="1">A helicase/nuclease that prepares dsDNA breaks (DSB) for recombinational DNA repair. Binds to DSBs and unwinds DNA via a highly rapid and processive ATP-dependent bidirectional helicase activity. Unwinds dsDNA until it encounters a Chi (crossover hotspot instigator) sequence from the 3' direction. Cuts ssDNA a few nucleotides 3' to the Chi site. The properties and activities of the enzyme are changed at Chi. The Chi-altered holoenzyme produces a long 3'-ssDNA overhang and facilitates RecA-binding to the ssDNA for homologous DNA recombination and repair. Holoenzyme degrades any linearized DNA that is unable to undergo homologous recombination. In the holoenzyme this subunit contributes ATPase, 3'-5' helicase, exonuclease activity and loads RecA onto ssDNA.</text>
</comment>
<comment type="catalytic activity">
    <reaction evidence="1">
        <text>Exonucleolytic cleavage (in the presence of ATP) in either 5'- to 3'- or 3'- to 5'-direction to yield 5'-phosphooligonucleotides.</text>
        <dbReference type="EC" id="3.1.11.5"/>
    </reaction>
</comment>
<comment type="catalytic activity">
    <reaction evidence="1">
        <text>Couples ATP hydrolysis with the unwinding of duplex DNA by translocating in the 3'-5' direction.</text>
        <dbReference type="EC" id="5.6.2.4"/>
    </reaction>
</comment>
<comment type="catalytic activity">
    <reaction evidence="1">
        <text>ATP + H2O = ADP + phosphate + H(+)</text>
        <dbReference type="Rhea" id="RHEA:13065"/>
        <dbReference type="ChEBI" id="CHEBI:15377"/>
        <dbReference type="ChEBI" id="CHEBI:15378"/>
        <dbReference type="ChEBI" id="CHEBI:30616"/>
        <dbReference type="ChEBI" id="CHEBI:43474"/>
        <dbReference type="ChEBI" id="CHEBI:456216"/>
        <dbReference type="EC" id="5.6.2.4"/>
    </reaction>
</comment>
<comment type="cofactor">
    <cofactor evidence="1">
        <name>Mg(2+)</name>
        <dbReference type="ChEBI" id="CHEBI:18420"/>
    </cofactor>
    <text evidence="1">Binds 1 Mg(2+) ion per subunit.</text>
</comment>
<comment type="subunit">
    <text evidence="1">Heterotrimer of RecB, RecC and RecD. All subunits contribute to DNA-binding. Interacts with RecA.</text>
</comment>
<comment type="domain">
    <text evidence="1">The N-terminal DNA-binding domain is a ssDNA-dependent ATPase and has ATP-dependent 3'-5' helicase function. This domain interacts with RecC.</text>
</comment>
<comment type="domain">
    <text evidence="1">The C-terminal domain has nuclease activity and interacts with RecD. It interacts with RecA, facilitating its loading onto ssDNA.</text>
</comment>
<comment type="miscellaneous">
    <text evidence="1">In the RecBCD complex, RecB has a slow 3'-5' helicase, an exonuclease activity and loads RecA onto ssDNA, RecD has a fast 5'-3' helicase activity, while RecC stimulates the ATPase and processivity of the RecB helicase and contributes to recognition of the Chi site.</text>
</comment>
<comment type="similarity">
    <text evidence="1">Belongs to the helicase family. UvrD subfamily.</text>
</comment>
<reference key="1">
    <citation type="journal article" date="1998" name="Science">
        <title>Genome sequence of an obligate intracellular pathogen of humans: Chlamydia trachomatis.</title>
        <authorList>
            <person name="Stephens R.S."/>
            <person name="Kalman S."/>
            <person name="Lammel C.J."/>
            <person name="Fan J."/>
            <person name="Marathe R."/>
            <person name="Aravind L."/>
            <person name="Mitchell W.P."/>
            <person name="Olinger L."/>
            <person name="Tatusov R.L."/>
            <person name="Zhao Q."/>
            <person name="Koonin E.V."/>
            <person name="Davis R.W."/>
        </authorList>
    </citation>
    <scope>NUCLEOTIDE SEQUENCE [LARGE SCALE GENOMIC DNA]</scope>
    <source>
        <strain>ATCC VR-885 / DSM 19411 / UW-3/Cx</strain>
    </source>
</reference>
<gene>
    <name evidence="1" type="primary">recB</name>
    <name type="ordered locus">CT_639</name>
</gene>
<feature type="chain" id="PRO_0000102045" description="RecBCD enzyme subunit RecB">
    <location>
        <begin position="1"/>
        <end position="1026"/>
    </location>
</feature>
<feature type="domain" description="UvrD-like helicase ATP-binding" evidence="1">
    <location>
        <begin position="1"/>
        <end position="438"/>
    </location>
</feature>
<feature type="region of interest" description="DNA-binding and helicase activity, interacts with RecC" evidence="1">
    <location>
        <begin position="1"/>
        <end position="766"/>
    </location>
</feature>
<feature type="region of interest" description="Nuclease activity, interacts with RecD and RecA" evidence="1">
    <location>
        <begin position="815"/>
        <end position="1026"/>
    </location>
</feature>
<feature type="active site" description="For nuclease activity" evidence="1">
    <location>
        <position position="953"/>
    </location>
</feature>
<feature type="binding site" evidence="1">
    <location>
        <begin position="21"/>
        <end position="28"/>
    </location>
    <ligand>
        <name>ATP</name>
        <dbReference type="ChEBI" id="CHEBI:30616"/>
    </ligand>
</feature>
<feature type="binding site" evidence="1">
    <location>
        <position position="854"/>
    </location>
    <ligand>
        <name>Mg(2+)</name>
        <dbReference type="ChEBI" id="CHEBI:18420"/>
    </ligand>
</feature>
<feature type="binding site" evidence="1">
    <location>
        <position position="940"/>
    </location>
    <ligand>
        <name>Mg(2+)</name>
        <dbReference type="ChEBI" id="CHEBI:18420"/>
    </ligand>
</feature>
<feature type="binding site" evidence="1">
    <location>
        <position position="953"/>
    </location>
    <ligand>
        <name>Mg(2+)</name>
        <dbReference type="ChEBI" id="CHEBI:18420"/>
    </ligand>
</feature>